<evidence type="ECO:0000255" key="1">
    <source>
        <dbReference type="HAMAP-Rule" id="MF_00111"/>
    </source>
</evidence>
<sequence>MVVMGNGPLKGTVATSGAKNAALPILFSTLLAEGNHVFTNMPKLKDIESTSELLNSLGCETKWVGDEFHVTVNKPSSFEASYDLVRKMRASFLCMGPMLAKYGEAVVSQPGGCAIGSRPIDLHLDGFRALGATITQKEGYVHAGSPKLKGGTFLFETVTVGGTENVMMAATLADGVTVLENAAKEPEIVDLAEYLNKMGAKITGHGTSVIRIEGVAKLTPAKHSIMPDRIEAGTLLIAGAITKGQVTVTKCVPAHLEALILKMREAGFKIETTKDTMTVFPCDQWEAVDITTAPHPLFPTDLQAQFMALMTVAHGTSVITETVFENRFMHVTELSRLGADITPKTRVAVVRGCPGKLTGAPVMATDLRASASLVLAGLVASGETVVSRIYHLDRGYEKLEDKLSSLGAKIRRIE</sequence>
<name>MURA_BDEBA</name>
<keyword id="KW-0131">Cell cycle</keyword>
<keyword id="KW-0132">Cell division</keyword>
<keyword id="KW-0133">Cell shape</keyword>
<keyword id="KW-0961">Cell wall biogenesis/degradation</keyword>
<keyword id="KW-0963">Cytoplasm</keyword>
<keyword id="KW-0573">Peptidoglycan synthesis</keyword>
<keyword id="KW-0670">Pyruvate</keyword>
<keyword id="KW-1185">Reference proteome</keyword>
<keyword id="KW-0808">Transferase</keyword>
<feature type="chain" id="PRO_0000231171" description="UDP-N-acetylglucosamine 1-carboxyvinyltransferase">
    <location>
        <begin position="1"/>
        <end position="414"/>
    </location>
</feature>
<feature type="active site" description="Proton donor" evidence="1">
    <location>
        <position position="113"/>
    </location>
</feature>
<feature type="binding site" evidence="1">
    <location>
        <begin position="19"/>
        <end position="20"/>
    </location>
    <ligand>
        <name>phosphoenolpyruvate</name>
        <dbReference type="ChEBI" id="CHEBI:58702"/>
    </ligand>
</feature>
<feature type="binding site" evidence="1">
    <location>
        <position position="89"/>
    </location>
    <ligand>
        <name>UDP-N-acetyl-alpha-D-glucosamine</name>
        <dbReference type="ChEBI" id="CHEBI:57705"/>
    </ligand>
</feature>
<feature type="binding site" evidence="1">
    <location>
        <begin position="118"/>
        <end position="122"/>
    </location>
    <ligand>
        <name>UDP-N-acetyl-alpha-D-glucosamine</name>
        <dbReference type="ChEBI" id="CHEBI:57705"/>
    </ligand>
</feature>
<feature type="binding site" evidence="1">
    <location>
        <position position="301"/>
    </location>
    <ligand>
        <name>UDP-N-acetyl-alpha-D-glucosamine</name>
        <dbReference type="ChEBI" id="CHEBI:57705"/>
    </ligand>
</feature>
<feature type="binding site" evidence="1">
    <location>
        <position position="323"/>
    </location>
    <ligand>
        <name>UDP-N-acetyl-alpha-D-glucosamine</name>
        <dbReference type="ChEBI" id="CHEBI:57705"/>
    </ligand>
</feature>
<feature type="modified residue" description="2-(S-cysteinyl)pyruvic acid O-phosphothioketal" evidence="1">
    <location>
        <position position="113"/>
    </location>
</feature>
<reference key="1">
    <citation type="journal article" date="2004" name="Science">
        <title>A predator unmasked: life cycle of Bdellovibrio bacteriovorus from a genomic perspective.</title>
        <authorList>
            <person name="Rendulic S."/>
            <person name="Jagtap P."/>
            <person name="Rosinus A."/>
            <person name="Eppinger M."/>
            <person name="Baar C."/>
            <person name="Lanz C."/>
            <person name="Keller H."/>
            <person name="Lambert C."/>
            <person name="Evans K.J."/>
            <person name="Goesmann A."/>
            <person name="Meyer F."/>
            <person name="Sockett R.E."/>
            <person name="Schuster S.C."/>
        </authorList>
    </citation>
    <scope>NUCLEOTIDE SEQUENCE [LARGE SCALE GENOMIC DNA]</scope>
    <source>
        <strain>ATCC 15356 / DSM 50701 / NCIMB 9529 / HD100</strain>
    </source>
</reference>
<proteinExistence type="inferred from homology"/>
<gene>
    <name evidence="1" type="primary">murA</name>
    <name type="ordered locus">Bd0071</name>
</gene>
<dbReference type="EC" id="2.5.1.7" evidence="1"/>
<dbReference type="EMBL" id="BX842646">
    <property type="protein sequence ID" value="CAE77751.1"/>
    <property type="molecule type" value="Genomic_DNA"/>
</dbReference>
<dbReference type="SMR" id="Q6MRK7"/>
<dbReference type="STRING" id="264462.Bd0071"/>
<dbReference type="KEGG" id="bba:Bd0071"/>
<dbReference type="eggNOG" id="COG0766">
    <property type="taxonomic scope" value="Bacteria"/>
</dbReference>
<dbReference type="HOGENOM" id="CLU_027387_0_0_7"/>
<dbReference type="UniPathway" id="UPA00219"/>
<dbReference type="Proteomes" id="UP000008080">
    <property type="component" value="Chromosome"/>
</dbReference>
<dbReference type="GO" id="GO:0005737">
    <property type="term" value="C:cytoplasm"/>
    <property type="evidence" value="ECO:0007669"/>
    <property type="project" value="UniProtKB-SubCell"/>
</dbReference>
<dbReference type="GO" id="GO:0008760">
    <property type="term" value="F:UDP-N-acetylglucosamine 1-carboxyvinyltransferase activity"/>
    <property type="evidence" value="ECO:0007669"/>
    <property type="project" value="UniProtKB-UniRule"/>
</dbReference>
<dbReference type="GO" id="GO:0051301">
    <property type="term" value="P:cell division"/>
    <property type="evidence" value="ECO:0007669"/>
    <property type="project" value="UniProtKB-KW"/>
</dbReference>
<dbReference type="GO" id="GO:0071555">
    <property type="term" value="P:cell wall organization"/>
    <property type="evidence" value="ECO:0007669"/>
    <property type="project" value="UniProtKB-KW"/>
</dbReference>
<dbReference type="GO" id="GO:0009252">
    <property type="term" value="P:peptidoglycan biosynthetic process"/>
    <property type="evidence" value="ECO:0007669"/>
    <property type="project" value="UniProtKB-UniRule"/>
</dbReference>
<dbReference type="GO" id="GO:0008360">
    <property type="term" value="P:regulation of cell shape"/>
    <property type="evidence" value="ECO:0007669"/>
    <property type="project" value="UniProtKB-KW"/>
</dbReference>
<dbReference type="GO" id="GO:0019277">
    <property type="term" value="P:UDP-N-acetylgalactosamine biosynthetic process"/>
    <property type="evidence" value="ECO:0007669"/>
    <property type="project" value="InterPro"/>
</dbReference>
<dbReference type="CDD" id="cd01555">
    <property type="entry name" value="UdpNAET"/>
    <property type="match status" value="1"/>
</dbReference>
<dbReference type="FunFam" id="3.65.10.10:FF:000001">
    <property type="entry name" value="UDP-N-acetylglucosamine 1-carboxyvinyltransferase"/>
    <property type="match status" value="1"/>
</dbReference>
<dbReference type="Gene3D" id="3.65.10.10">
    <property type="entry name" value="Enolpyruvate transferase domain"/>
    <property type="match status" value="2"/>
</dbReference>
<dbReference type="HAMAP" id="MF_00111">
    <property type="entry name" value="MurA"/>
    <property type="match status" value="1"/>
</dbReference>
<dbReference type="InterPro" id="IPR001986">
    <property type="entry name" value="Enolpyruvate_Tfrase_dom"/>
</dbReference>
<dbReference type="InterPro" id="IPR036968">
    <property type="entry name" value="Enolpyruvate_Tfrase_sf"/>
</dbReference>
<dbReference type="InterPro" id="IPR050068">
    <property type="entry name" value="MurA_subfamily"/>
</dbReference>
<dbReference type="InterPro" id="IPR013792">
    <property type="entry name" value="RNA3'P_cycl/enolpyr_Trfase_a/b"/>
</dbReference>
<dbReference type="InterPro" id="IPR005750">
    <property type="entry name" value="UDP_GlcNAc_COvinyl_MurA"/>
</dbReference>
<dbReference type="NCBIfam" id="TIGR01072">
    <property type="entry name" value="murA"/>
    <property type="match status" value="1"/>
</dbReference>
<dbReference type="NCBIfam" id="NF006873">
    <property type="entry name" value="PRK09369.1"/>
    <property type="match status" value="1"/>
</dbReference>
<dbReference type="PANTHER" id="PTHR43783">
    <property type="entry name" value="UDP-N-ACETYLGLUCOSAMINE 1-CARBOXYVINYLTRANSFERASE"/>
    <property type="match status" value="1"/>
</dbReference>
<dbReference type="PANTHER" id="PTHR43783:SF1">
    <property type="entry name" value="UDP-N-ACETYLGLUCOSAMINE 1-CARBOXYVINYLTRANSFERASE"/>
    <property type="match status" value="1"/>
</dbReference>
<dbReference type="Pfam" id="PF00275">
    <property type="entry name" value="EPSP_synthase"/>
    <property type="match status" value="1"/>
</dbReference>
<dbReference type="SUPFAM" id="SSF55205">
    <property type="entry name" value="EPT/RTPC-like"/>
    <property type="match status" value="1"/>
</dbReference>
<organism>
    <name type="scientific">Bdellovibrio bacteriovorus (strain ATCC 15356 / DSM 50701 / NCIMB 9529 / HD100)</name>
    <dbReference type="NCBI Taxonomy" id="264462"/>
    <lineage>
        <taxon>Bacteria</taxon>
        <taxon>Pseudomonadati</taxon>
        <taxon>Bdellovibrionota</taxon>
        <taxon>Bdellovibrionia</taxon>
        <taxon>Bdellovibrionales</taxon>
        <taxon>Pseudobdellovibrionaceae</taxon>
        <taxon>Bdellovibrio</taxon>
    </lineage>
</organism>
<comment type="function">
    <text evidence="1">Cell wall formation. Adds enolpyruvyl to UDP-N-acetylglucosamine.</text>
</comment>
<comment type="catalytic activity">
    <reaction evidence="1">
        <text>phosphoenolpyruvate + UDP-N-acetyl-alpha-D-glucosamine = UDP-N-acetyl-3-O-(1-carboxyvinyl)-alpha-D-glucosamine + phosphate</text>
        <dbReference type="Rhea" id="RHEA:18681"/>
        <dbReference type="ChEBI" id="CHEBI:43474"/>
        <dbReference type="ChEBI" id="CHEBI:57705"/>
        <dbReference type="ChEBI" id="CHEBI:58702"/>
        <dbReference type="ChEBI" id="CHEBI:68483"/>
        <dbReference type="EC" id="2.5.1.7"/>
    </reaction>
</comment>
<comment type="pathway">
    <text evidence="1">Cell wall biogenesis; peptidoglycan biosynthesis.</text>
</comment>
<comment type="subcellular location">
    <subcellularLocation>
        <location evidence="1">Cytoplasm</location>
    </subcellularLocation>
</comment>
<comment type="similarity">
    <text evidence="1">Belongs to the EPSP synthase family. MurA subfamily.</text>
</comment>
<accession>Q6MRK7</accession>
<protein>
    <recommendedName>
        <fullName evidence="1">UDP-N-acetylglucosamine 1-carboxyvinyltransferase</fullName>
        <ecNumber evidence="1">2.5.1.7</ecNumber>
    </recommendedName>
    <alternativeName>
        <fullName evidence="1">Enoylpyruvate transferase</fullName>
    </alternativeName>
    <alternativeName>
        <fullName evidence="1">UDP-N-acetylglucosamine enolpyruvyl transferase</fullName>
        <shortName evidence="1">EPT</shortName>
    </alternativeName>
</protein>